<dbReference type="EC" id="2.7.1.21" evidence="1"/>
<dbReference type="EMBL" id="CP000248">
    <property type="protein sequence ID" value="ABD26923.1"/>
    <property type="molecule type" value="Genomic_DNA"/>
</dbReference>
<dbReference type="RefSeq" id="WP_011446129.1">
    <property type="nucleotide sequence ID" value="NC_007794.1"/>
</dbReference>
<dbReference type="SMR" id="Q2G5F0"/>
<dbReference type="STRING" id="279238.Saro_2487"/>
<dbReference type="KEGG" id="nar:Saro_2487"/>
<dbReference type="eggNOG" id="COG1435">
    <property type="taxonomic scope" value="Bacteria"/>
</dbReference>
<dbReference type="HOGENOM" id="CLU_064400_2_1_5"/>
<dbReference type="Proteomes" id="UP000009134">
    <property type="component" value="Chromosome"/>
</dbReference>
<dbReference type="GO" id="GO:0005829">
    <property type="term" value="C:cytosol"/>
    <property type="evidence" value="ECO:0007669"/>
    <property type="project" value="TreeGrafter"/>
</dbReference>
<dbReference type="GO" id="GO:0005524">
    <property type="term" value="F:ATP binding"/>
    <property type="evidence" value="ECO:0007669"/>
    <property type="project" value="UniProtKB-UniRule"/>
</dbReference>
<dbReference type="GO" id="GO:0004797">
    <property type="term" value="F:thymidine kinase activity"/>
    <property type="evidence" value="ECO:0007669"/>
    <property type="project" value="UniProtKB-UniRule"/>
</dbReference>
<dbReference type="GO" id="GO:0008270">
    <property type="term" value="F:zinc ion binding"/>
    <property type="evidence" value="ECO:0007669"/>
    <property type="project" value="UniProtKB-UniRule"/>
</dbReference>
<dbReference type="GO" id="GO:0071897">
    <property type="term" value="P:DNA biosynthetic process"/>
    <property type="evidence" value="ECO:0007669"/>
    <property type="project" value="UniProtKB-KW"/>
</dbReference>
<dbReference type="GO" id="GO:0046104">
    <property type="term" value="P:thymidine metabolic process"/>
    <property type="evidence" value="ECO:0007669"/>
    <property type="project" value="TreeGrafter"/>
</dbReference>
<dbReference type="Gene3D" id="3.30.60.20">
    <property type="match status" value="1"/>
</dbReference>
<dbReference type="Gene3D" id="3.40.50.300">
    <property type="entry name" value="P-loop containing nucleotide triphosphate hydrolases"/>
    <property type="match status" value="1"/>
</dbReference>
<dbReference type="HAMAP" id="MF_00124">
    <property type="entry name" value="Thymidine_kinase"/>
    <property type="match status" value="1"/>
</dbReference>
<dbReference type="InterPro" id="IPR027417">
    <property type="entry name" value="P-loop_NTPase"/>
</dbReference>
<dbReference type="InterPro" id="IPR001267">
    <property type="entry name" value="Thymidine_kinase"/>
</dbReference>
<dbReference type="InterPro" id="IPR020633">
    <property type="entry name" value="Thymidine_kinase_CS"/>
</dbReference>
<dbReference type="NCBIfam" id="NF003300">
    <property type="entry name" value="PRK04296.1-5"/>
    <property type="match status" value="1"/>
</dbReference>
<dbReference type="PANTHER" id="PTHR11441">
    <property type="entry name" value="THYMIDINE KINASE"/>
    <property type="match status" value="1"/>
</dbReference>
<dbReference type="PANTHER" id="PTHR11441:SF0">
    <property type="entry name" value="THYMIDINE KINASE, CYTOSOLIC"/>
    <property type="match status" value="1"/>
</dbReference>
<dbReference type="Pfam" id="PF00265">
    <property type="entry name" value="TK"/>
    <property type="match status" value="1"/>
</dbReference>
<dbReference type="PIRSF" id="PIRSF035805">
    <property type="entry name" value="TK_cell"/>
    <property type="match status" value="1"/>
</dbReference>
<dbReference type="SUPFAM" id="SSF57716">
    <property type="entry name" value="Glucocorticoid receptor-like (DNA-binding domain)"/>
    <property type="match status" value="1"/>
</dbReference>
<dbReference type="SUPFAM" id="SSF52540">
    <property type="entry name" value="P-loop containing nucleoside triphosphate hydrolases"/>
    <property type="match status" value="1"/>
</dbReference>
<dbReference type="PROSITE" id="PS00603">
    <property type="entry name" value="TK_CELLULAR_TYPE"/>
    <property type="match status" value="1"/>
</dbReference>
<sequence>MAKLYFYYASMNAGKSTNLLQADFNYRERGMATMLWTAALDDRGGERAIESRIGLGADAHRFDAGTDLWQRISAAHAVQPLSCVLVDEAQFLRRDQVWQLARVADAAGIPVLCYGLRTDFQGELFEGSAALLGIADSLIELKAVCHCGRKATMNLRVDDSGAAVRAGRQTEIGGNDRYVALCRRHFSEAMGQ</sequence>
<feature type="chain" id="PRO_0000242798" description="Thymidine kinase">
    <location>
        <begin position="1"/>
        <end position="192"/>
    </location>
</feature>
<feature type="active site" description="Proton acceptor" evidence="1">
    <location>
        <position position="88"/>
    </location>
</feature>
<feature type="binding site" evidence="1">
    <location>
        <begin position="9"/>
        <end position="16"/>
    </location>
    <ligand>
        <name>ATP</name>
        <dbReference type="ChEBI" id="CHEBI:30616"/>
    </ligand>
</feature>
<feature type="binding site" evidence="1">
    <location>
        <begin position="87"/>
        <end position="90"/>
    </location>
    <ligand>
        <name>ATP</name>
        <dbReference type="ChEBI" id="CHEBI:30616"/>
    </ligand>
</feature>
<feature type="binding site" evidence="1">
    <location>
        <position position="145"/>
    </location>
    <ligand>
        <name>Zn(2+)</name>
        <dbReference type="ChEBI" id="CHEBI:29105"/>
    </ligand>
</feature>
<feature type="binding site" evidence="1">
    <location>
        <position position="147"/>
    </location>
    <ligand>
        <name>Zn(2+)</name>
        <dbReference type="ChEBI" id="CHEBI:29105"/>
    </ligand>
</feature>
<feature type="binding site" evidence="1">
    <location>
        <position position="182"/>
    </location>
    <ligand>
        <name>Zn(2+)</name>
        <dbReference type="ChEBI" id="CHEBI:29105"/>
    </ligand>
</feature>
<feature type="binding site" evidence="1">
    <location>
        <position position="185"/>
    </location>
    <ligand>
        <name>Zn(2+)</name>
        <dbReference type="ChEBI" id="CHEBI:29105"/>
    </ligand>
</feature>
<evidence type="ECO:0000255" key="1">
    <source>
        <dbReference type="HAMAP-Rule" id="MF_00124"/>
    </source>
</evidence>
<proteinExistence type="inferred from homology"/>
<accession>Q2G5F0</accession>
<name>KITH_NOVAD</name>
<gene>
    <name evidence="1" type="primary">tdk</name>
    <name type="ordered locus">Saro_2487</name>
</gene>
<comment type="catalytic activity">
    <reaction evidence="1">
        <text>thymidine + ATP = dTMP + ADP + H(+)</text>
        <dbReference type="Rhea" id="RHEA:19129"/>
        <dbReference type="ChEBI" id="CHEBI:15378"/>
        <dbReference type="ChEBI" id="CHEBI:17748"/>
        <dbReference type="ChEBI" id="CHEBI:30616"/>
        <dbReference type="ChEBI" id="CHEBI:63528"/>
        <dbReference type="ChEBI" id="CHEBI:456216"/>
        <dbReference type="EC" id="2.7.1.21"/>
    </reaction>
</comment>
<comment type="subunit">
    <text evidence="1">Homotetramer.</text>
</comment>
<comment type="subcellular location">
    <subcellularLocation>
        <location evidence="1">Cytoplasm</location>
    </subcellularLocation>
</comment>
<comment type="similarity">
    <text evidence="1">Belongs to the thymidine kinase family.</text>
</comment>
<reference key="1">
    <citation type="submission" date="2006-01" db="EMBL/GenBank/DDBJ databases">
        <title>Complete sequence of Novosphingobium aromaticivorans DSM 12444.</title>
        <authorList>
            <consortium name="US DOE Joint Genome Institute"/>
            <person name="Copeland A."/>
            <person name="Lucas S."/>
            <person name="Lapidus A."/>
            <person name="Barry K."/>
            <person name="Detter J.C."/>
            <person name="Glavina T."/>
            <person name="Hammon N."/>
            <person name="Israni S."/>
            <person name="Pitluck S."/>
            <person name="Chain P."/>
            <person name="Malfatti S."/>
            <person name="Shin M."/>
            <person name="Vergez L."/>
            <person name="Schmutz J."/>
            <person name="Larimer F."/>
            <person name="Land M."/>
            <person name="Kyrpides N."/>
            <person name="Ivanova N."/>
            <person name="Fredrickson J."/>
            <person name="Balkwill D."/>
            <person name="Romine M.F."/>
            <person name="Richardson P."/>
        </authorList>
    </citation>
    <scope>NUCLEOTIDE SEQUENCE [LARGE SCALE GENOMIC DNA]</scope>
    <source>
        <strain>ATCC 700278 / DSM 12444 / CCUG 56034 / CIP 105152 / NBRC 16084 / F199</strain>
    </source>
</reference>
<protein>
    <recommendedName>
        <fullName evidence="1">Thymidine kinase</fullName>
        <ecNumber evidence="1">2.7.1.21</ecNumber>
    </recommendedName>
</protein>
<keyword id="KW-0067">ATP-binding</keyword>
<keyword id="KW-0963">Cytoplasm</keyword>
<keyword id="KW-0237">DNA synthesis</keyword>
<keyword id="KW-0418">Kinase</keyword>
<keyword id="KW-0479">Metal-binding</keyword>
<keyword id="KW-0547">Nucleotide-binding</keyword>
<keyword id="KW-1185">Reference proteome</keyword>
<keyword id="KW-0808">Transferase</keyword>
<keyword id="KW-0862">Zinc</keyword>
<organism>
    <name type="scientific">Novosphingobium aromaticivorans (strain ATCC 700278 / DSM 12444 / CCUG 56034 / CIP 105152 / NBRC 16084 / F199)</name>
    <dbReference type="NCBI Taxonomy" id="279238"/>
    <lineage>
        <taxon>Bacteria</taxon>
        <taxon>Pseudomonadati</taxon>
        <taxon>Pseudomonadota</taxon>
        <taxon>Alphaproteobacteria</taxon>
        <taxon>Sphingomonadales</taxon>
        <taxon>Sphingomonadaceae</taxon>
        <taxon>Novosphingobium</taxon>
    </lineage>
</organism>